<sequence length="263" mass="29258">MTKPPPFPEPDDSETADERQFFAQQKTRKLDTVATLGGTGEAHYHGHRDRLRARYREQGDAALADYDILELILFRLIPRRDTKPIAKELLARFGTLSGVFGAPQHLLQEVKGVGEAVALDLKLIATAAQRTLKSELRNKQVLSSWSAVIDYCHAAMAHETKEQFRILFLDKRNALIADEVQQQGTIDHTPVYPREVVKRALELSATALILAHNHPSGDPTPSRADIEMTKLIAEAAKPLGITVHDHVIIGKDGHVSMKGLRLF</sequence>
<accession>C3MBW4</accession>
<organism>
    <name type="scientific">Sinorhizobium fredii (strain NBRC 101917 / NGR234)</name>
    <dbReference type="NCBI Taxonomy" id="394"/>
    <lineage>
        <taxon>Bacteria</taxon>
        <taxon>Pseudomonadati</taxon>
        <taxon>Pseudomonadota</taxon>
        <taxon>Alphaproteobacteria</taxon>
        <taxon>Hyphomicrobiales</taxon>
        <taxon>Rhizobiaceae</taxon>
        <taxon>Sinorhizobium/Ensifer group</taxon>
        <taxon>Sinorhizobium</taxon>
    </lineage>
</organism>
<dbReference type="EMBL" id="CP001389">
    <property type="protein sequence ID" value="ACP25176.1"/>
    <property type="molecule type" value="Genomic_DNA"/>
</dbReference>
<dbReference type="RefSeq" id="WP_012707950.1">
    <property type="nucleotide sequence ID" value="NC_012587.1"/>
</dbReference>
<dbReference type="RefSeq" id="YP_002825929.1">
    <property type="nucleotide sequence ID" value="NC_012587.1"/>
</dbReference>
<dbReference type="SMR" id="C3MBW4"/>
<dbReference type="STRING" id="394.NGR_c13970"/>
<dbReference type="KEGG" id="rhi:NGR_c13970"/>
<dbReference type="PATRIC" id="fig|394.7.peg.4217"/>
<dbReference type="eggNOG" id="COG2003">
    <property type="taxonomic scope" value="Bacteria"/>
</dbReference>
<dbReference type="HOGENOM" id="CLU_073529_0_0_5"/>
<dbReference type="OrthoDB" id="9804482at2"/>
<dbReference type="Proteomes" id="UP000001054">
    <property type="component" value="Chromosome"/>
</dbReference>
<dbReference type="GO" id="GO:0046872">
    <property type="term" value="F:metal ion binding"/>
    <property type="evidence" value="ECO:0007669"/>
    <property type="project" value="UniProtKB-KW"/>
</dbReference>
<dbReference type="GO" id="GO:0008237">
    <property type="term" value="F:metallopeptidase activity"/>
    <property type="evidence" value="ECO:0007669"/>
    <property type="project" value="UniProtKB-KW"/>
</dbReference>
<dbReference type="GO" id="GO:0006508">
    <property type="term" value="P:proteolysis"/>
    <property type="evidence" value="ECO:0007669"/>
    <property type="project" value="UniProtKB-KW"/>
</dbReference>
<dbReference type="CDD" id="cd08071">
    <property type="entry name" value="MPN_DUF2466"/>
    <property type="match status" value="1"/>
</dbReference>
<dbReference type="Gene3D" id="1.10.150.20">
    <property type="entry name" value="5' to 3' exonuclease, C-terminal subdomain"/>
    <property type="match status" value="1"/>
</dbReference>
<dbReference type="Gene3D" id="3.40.140.10">
    <property type="entry name" value="Cytidine Deaminase, domain 2"/>
    <property type="match status" value="1"/>
</dbReference>
<dbReference type="InterPro" id="IPR037518">
    <property type="entry name" value="MPN"/>
</dbReference>
<dbReference type="InterPro" id="IPR025657">
    <property type="entry name" value="RadC_JAB"/>
</dbReference>
<dbReference type="InterPro" id="IPR010994">
    <property type="entry name" value="RuvA_2-like"/>
</dbReference>
<dbReference type="InterPro" id="IPR001405">
    <property type="entry name" value="UPF0758"/>
</dbReference>
<dbReference type="InterPro" id="IPR020891">
    <property type="entry name" value="UPF0758_CS"/>
</dbReference>
<dbReference type="NCBIfam" id="NF000642">
    <property type="entry name" value="PRK00024.1"/>
    <property type="match status" value="1"/>
</dbReference>
<dbReference type="NCBIfam" id="TIGR00608">
    <property type="entry name" value="radc"/>
    <property type="match status" value="1"/>
</dbReference>
<dbReference type="PANTHER" id="PTHR30471">
    <property type="entry name" value="DNA REPAIR PROTEIN RADC"/>
    <property type="match status" value="1"/>
</dbReference>
<dbReference type="PANTHER" id="PTHR30471:SF3">
    <property type="entry name" value="UPF0758 PROTEIN YEES-RELATED"/>
    <property type="match status" value="1"/>
</dbReference>
<dbReference type="Pfam" id="PF04002">
    <property type="entry name" value="RadC"/>
    <property type="match status" value="1"/>
</dbReference>
<dbReference type="SUPFAM" id="SSF102712">
    <property type="entry name" value="JAB1/MPN domain"/>
    <property type="match status" value="1"/>
</dbReference>
<dbReference type="SUPFAM" id="SSF47781">
    <property type="entry name" value="RuvA domain 2-like"/>
    <property type="match status" value="1"/>
</dbReference>
<dbReference type="PROSITE" id="PS50249">
    <property type="entry name" value="MPN"/>
    <property type="match status" value="1"/>
</dbReference>
<dbReference type="PROSITE" id="PS01302">
    <property type="entry name" value="UPF0758"/>
    <property type="match status" value="1"/>
</dbReference>
<protein>
    <recommendedName>
        <fullName>UPF0758 protein NGR_c13970</fullName>
    </recommendedName>
</protein>
<feature type="chain" id="PRO_1000195302" description="UPF0758 protein NGR_c13970">
    <location>
        <begin position="1"/>
        <end position="263"/>
    </location>
</feature>
<feature type="domain" description="MPN" evidence="1">
    <location>
        <begin position="141"/>
        <end position="263"/>
    </location>
</feature>
<feature type="short sequence motif" description="JAMM motif" evidence="1">
    <location>
        <begin position="212"/>
        <end position="225"/>
    </location>
</feature>
<feature type="binding site" evidence="1">
    <location>
        <position position="212"/>
    </location>
    <ligand>
        <name>Zn(2+)</name>
        <dbReference type="ChEBI" id="CHEBI:29105"/>
        <note>catalytic</note>
    </ligand>
</feature>
<feature type="binding site" evidence="1">
    <location>
        <position position="214"/>
    </location>
    <ligand>
        <name>Zn(2+)</name>
        <dbReference type="ChEBI" id="CHEBI:29105"/>
        <note>catalytic</note>
    </ligand>
</feature>
<feature type="binding site" evidence="1">
    <location>
        <position position="225"/>
    </location>
    <ligand>
        <name>Zn(2+)</name>
        <dbReference type="ChEBI" id="CHEBI:29105"/>
        <note>catalytic</note>
    </ligand>
</feature>
<name>Y1397_SINFN</name>
<reference key="1">
    <citation type="journal article" date="2009" name="Appl. Environ. Microbiol.">
        <title>Rhizobium sp. strain NGR234 possesses a remarkable number of secretion systems.</title>
        <authorList>
            <person name="Schmeisser C."/>
            <person name="Liesegang H."/>
            <person name="Krysciak D."/>
            <person name="Bakkou N."/>
            <person name="Le Quere A."/>
            <person name="Wollherr A."/>
            <person name="Heinemeyer I."/>
            <person name="Morgenstern B."/>
            <person name="Pommerening-Roeser A."/>
            <person name="Flores M."/>
            <person name="Palacios R."/>
            <person name="Brenner S."/>
            <person name="Gottschalk G."/>
            <person name="Schmitz R.A."/>
            <person name="Broughton W.J."/>
            <person name="Perret X."/>
            <person name="Strittmatter A.W."/>
            <person name="Streit W.R."/>
        </authorList>
    </citation>
    <scope>NUCLEOTIDE SEQUENCE [LARGE SCALE GENOMIC DNA]</scope>
    <source>
        <strain>NBRC 101917 / NGR234</strain>
    </source>
</reference>
<evidence type="ECO:0000255" key="1">
    <source>
        <dbReference type="PROSITE-ProRule" id="PRU01182"/>
    </source>
</evidence>
<evidence type="ECO:0000305" key="2"/>
<keyword id="KW-0378">Hydrolase</keyword>
<keyword id="KW-0479">Metal-binding</keyword>
<keyword id="KW-0482">Metalloprotease</keyword>
<keyword id="KW-0645">Protease</keyword>
<keyword id="KW-1185">Reference proteome</keyword>
<keyword id="KW-0862">Zinc</keyword>
<comment type="similarity">
    <text evidence="2">Belongs to the UPF0758 family.</text>
</comment>
<gene>
    <name type="ordered locus">NGR_c13970</name>
</gene>
<proteinExistence type="inferred from homology"/>